<keyword id="KW-1185">Reference proteome</keyword>
<reference key="1">
    <citation type="journal article" date="1992" name="Virology">
        <title>Channel catfish virus: a new type of herpesvirus.</title>
        <authorList>
            <person name="Davison A.J."/>
        </authorList>
    </citation>
    <scope>NUCLEOTIDE SEQUENCE [LARGE SCALE GENOMIC DNA]</scope>
</reference>
<organismHost>
    <name type="scientific">Ictaluridae</name>
    <name type="common">bullhead catfishes</name>
    <dbReference type="NCBI Taxonomy" id="7996"/>
</organismHost>
<sequence>MASFGERMSRAYWTMSMGMECYKASTSSESCQRRGVRDDTGTQPHGLVRPIPPEMPTTAHHRPVVVEGDRGPPRRPEKEPSTTTTKKKGPPTAATRTTSKKIVKNKASMDLAGTEKELEDECSFLFLEM</sequence>
<proteinExistence type="predicted"/>
<protein>
    <recommendedName>
        <fullName>Uncharacterized protein ORF42</fullName>
    </recommendedName>
</protein>
<accession>Q00101</accession>
<feature type="chain" id="PRO_0000222124" description="Uncharacterized protein ORF42">
    <location>
        <begin position="1"/>
        <end position="129"/>
    </location>
</feature>
<feature type="region of interest" description="Disordered" evidence="1">
    <location>
        <begin position="23"/>
        <end position="101"/>
    </location>
</feature>
<feature type="compositionally biased region" description="Basic and acidic residues" evidence="1">
    <location>
        <begin position="31"/>
        <end position="40"/>
    </location>
</feature>
<feature type="compositionally biased region" description="Basic and acidic residues" evidence="1">
    <location>
        <begin position="67"/>
        <end position="80"/>
    </location>
</feature>
<organism>
    <name type="scientific">Ictalurid herpesvirus 1 (strain Auburn)</name>
    <name type="common">IcHV-1</name>
    <name type="synonym">Channel catfish herpesvirus</name>
    <dbReference type="NCBI Taxonomy" id="766178"/>
    <lineage>
        <taxon>Viruses</taxon>
        <taxon>Duplodnaviria</taxon>
        <taxon>Heunggongvirae</taxon>
        <taxon>Peploviricota</taxon>
        <taxon>Herviviricetes</taxon>
        <taxon>Herpesvirales</taxon>
        <taxon>Alloherpesviridae</taxon>
        <taxon>Ictavirus</taxon>
        <taxon>Ictavirus ictaluridallo1</taxon>
        <taxon>Ictalurid herpesvirus 1</taxon>
    </lineage>
</organism>
<name>VG42_ICHVA</name>
<evidence type="ECO:0000256" key="1">
    <source>
        <dbReference type="SAM" id="MobiDB-lite"/>
    </source>
</evidence>
<gene>
    <name type="primary">ORF42</name>
</gene>
<dbReference type="EMBL" id="M75136">
    <property type="protein sequence ID" value="AAA88145.1"/>
    <property type="molecule type" value="Genomic_DNA"/>
</dbReference>
<dbReference type="PIR" id="G36790">
    <property type="entry name" value="G36790"/>
</dbReference>
<dbReference type="RefSeq" id="NP_041133.1">
    <property type="nucleotide sequence ID" value="NC_001493.2"/>
</dbReference>
<dbReference type="GeneID" id="1488453"/>
<dbReference type="KEGG" id="vg:1488453"/>
<dbReference type="Proteomes" id="UP000007643">
    <property type="component" value="Segment"/>
</dbReference>